<keyword id="KW-0004">4Fe-4S</keyword>
<keyword id="KW-0150">Chloroplast</keyword>
<keyword id="KW-0249">Electron transport</keyword>
<keyword id="KW-0408">Iron</keyword>
<keyword id="KW-0411">Iron-sulfur</keyword>
<keyword id="KW-0472">Membrane</keyword>
<keyword id="KW-0479">Metal-binding</keyword>
<keyword id="KW-0560">Oxidoreductase</keyword>
<keyword id="KW-0602">Photosynthesis</keyword>
<keyword id="KW-0603">Photosystem I</keyword>
<keyword id="KW-0934">Plastid</keyword>
<keyword id="KW-0677">Repeat</keyword>
<keyword id="KW-0793">Thylakoid</keyword>
<keyword id="KW-0813">Transport</keyword>
<feature type="initiator methionine" description="Removed" evidence="1">
    <location>
        <position position="1"/>
    </location>
</feature>
<feature type="chain" id="PRO_0000061969" description="Photosystem I iron-sulfur center">
    <location>
        <begin position="2"/>
        <end position="81"/>
    </location>
</feature>
<feature type="domain" description="4Fe-4S ferredoxin-type 1" evidence="2">
    <location>
        <begin position="2"/>
        <end position="31"/>
    </location>
</feature>
<feature type="domain" description="4Fe-4S ferredoxin-type 2" evidence="2">
    <location>
        <begin position="39"/>
        <end position="68"/>
    </location>
</feature>
<feature type="binding site" evidence="2">
    <location>
        <position position="11"/>
    </location>
    <ligand>
        <name>[4Fe-4S] cluster</name>
        <dbReference type="ChEBI" id="CHEBI:49883"/>
        <label>1</label>
    </ligand>
</feature>
<feature type="binding site" evidence="2">
    <location>
        <position position="14"/>
    </location>
    <ligand>
        <name>[4Fe-4S] cluster</name>
        <dbReference type="ChEBI" id="CHEBI:49883"/>
        <label>1</label>
    </ligand>
</feature>
<feature type="binding site" evidence="2">
    <location>
        <position position="17"/>
    </location>
    <ligand>
        <name>[4Fe-4S] cluster</name>
        <dbReference type="ChEBI" id="CHEBI:49883"/>
        <label>1</label>
    </ligand>
</feature>
<feature type="binding site" evidence="2">
    <location>
        <position position="21"/>
    </location>
    <ligand>
        <name>[4Fe-4S] cluster</name>
        <dbReference type="ChEBI" id="CHEBI:49883"/>
        <label>2</label>
    </ligand>
</feature>
<feature type="binding site" evidence="2">
    <location>
        <position position="48"/>
    </location>
    <ligand>
        <name>[4Fe-4S] cluster</name>
        <dbReference type="ChEBI" id="CHEBI:49883"/>
        <label>2</label>
    </ligand>
</feature>
<feature type="binding site" evidence="2">
    <location>
        <position position="51"/>
    </location>
    <ligand>
        <name>[4Fe-4S] cluster</name>
        <dbReference type="ChEBI" id="CHEBI:49883"/>
        <label>2</label>
    </ligand>
</feature>
<feature type="binding site" evidence="2">
    <location>
        <position position="54"/>
    </location>
    <ligand>
        <name>[4Fe-4S] cluster</name>
        <dbReference type="ChEBI" id="CHEBI:49883"/>
        <label>2</label>
    </ligand>
</feature>
<feature type="binding site" evidence="2">
    <location>
        <position position="58"/>
    </location>
    <ligand>
        <name>[4Fe-4S] cluster</name>
        <dbReference type="ChEBI" id="CHEBI:49883"/>
        <label>1</label>
    </ligand>
</feature>
<organism>
    <name type="scientific">Antithamnion sp.</name>
    <name type="common">Red alga</name>
    <dbReference type="NCBI Taxonomy" id="2767"/>
    <lineage>
        <taxon>Eukaryota</taxon>
        <taxon>Rhodophyta</taxon>
        <taxon>Florideophyceae</taxon>
        <taxon>Rhodymeniophycidae</taxon>
        <taxon>Ceramiales</taxon>
        <taxon>Ceramiaceae</taxon>
        <taxon>Antithamnion</taxon>
    </lineage>
</organism>
<accession>Q06439</accession>
<proteinExistence type="inferred from homology"/>
<name>PSAC_ANTSP</name>
<dbReference type="EC" id="1.97.1.12" evidence="2"/>
<dbReference type="EMBL" id="Z21705">
    <property type="protein sequence ID" value="CAA79810.1"/>
    <property type="molecule type" value="Genomic_DNA"/>
</dbReference>
<dbReference type="PIR" id="S39511">
    <property type="entry name" value="S39511"/>
</dbReference>
<dbReference type="SMR" id="Q06439"/>
<dbReference type="GO" id="GO:0009535">
    <property type="term" value="C:chloroplast thylakoid membrane"/>
    <property type="evidence" value="ECO:0007669"/>
    <property type="project" value="UniProtKB-SubCell"/>
</dbReference>
<dbReference type="GO" id="GO:0009522">
    <property type="term" value="C:photosystem I"/>
    <property type="evidence" value="ECO:0007669"/>
    <property type="project" value="UniProtKB-KW"/>
</dbReference>
<dbReference type="GO" id="GO:0051539">
    <property type="term" value="F:4 iron, 4 sulfur cluster binding"/>
    <property type="evidence" value="ECO:0007669"/>
    <property type="project" value="UniProtKB-KW"/>
</dbReference>
<dbReference type="GO" id="GO:0009055">
    <property type="term" value="F:electron transfer activity"/>
    <property type="evidence" value="ECO:0007669"/>
    <property type="project" value="UniProtKB-UniRule"/>
</dbReference>
<dbReference type="GO" id="GO:0046872">
    <property type="term" value="F:metal ion binding"/>
    <property type="evidence" value="ECO:0007669"/>
    <property type="project" value="UniProtKB-KW"/>
</dbReference>
<dbReference type="GO" id="GO:0016491">
    <property type="term" value="F:oxidoreductase activity"/>
    <property type="evidence" value="ECO:0007669"/>
    <property type="project" value="UniProtKB-KW"/>
</dbReference>
<dbReference type="GO" id="GO:0009773">
    <property type="term" value="P:photosynthetic electron transport in photosystem I"/>
    <property type="evidence" value="ECO:0007669"/>
    <property type="project" value="InterPro"/>
</dbReference>
<dbReference type="FunFam" id="3.30.70.20:FF:000001">
    <property type="entry name" value="Photosystem I iron-sulfur center"/>
    <property type="match status" value="1"/>
</dbReference>
<dbReference type="Gene3D" id="3.30.70.20">
    <property type="match status" value="1"/>
</dbReference>
<dbReference type="HAMAP" id="MF_01303">
    <property type="entry name" value="PSI_PsaC"/>
    <property type="match status" value="1"/>
</dbReference>
<dbReference type="InterPro" id="IPR017896">
    <property type="entry name" value="4Fe4S_Fe-S-bd"/>
</dbReference>
<dbReference type="InterPro" id="IPR017900">
    <property type="entry name" value="4Fe4S_Fe_S_CS"/>
</dbReference>
<dbReference type="InterPro" id="IPR050157">
    <property type="entry name" value="PSI_iron-sulfur_center"/>
</dbReference>
<dbReference type="InterPro" id="IPR017491">
    <property type="entry name" value="PSI_PsaC"/>
</dbReference>
<dbReference type="NCBIfam" id="TIGR03048">
    <property type="entry name" value="PS_I_psaC"/>
    <property type="match status" value="1"/>
</dbReference>
<dbReference type="PANTHER" id="PTHR24960:SF79">
    <property type="entry name" value="PHOTOSYSTEM I IRON-SULFUR CENTER"/>
    <property type="match status" value="1"/>
</dbReference>
<dbReference type="PANTHER" id="PTHR24960">
    <property type="entry name" value="PHOTOSYSTEM I IRON-SULFUR CENTER-RELATED"/>
    <property type="match status" value="1"/>
</dbReference>
<dbReference type="Pfam" id="PF12838">
    <property type="entry name" value="Fer4_7"/>
    <property type="match status" value="1"/>
</dbReference>
<dbReference type="SUPFAM" id="SSF54862">
    <property type="entry name" value="4Fe-4S ferredoxins"/>
    <property type="match status" value="1"/>
</dbReference>
<dbReference type="PROSITE" id="PS00198">
    <property type="entry name" value="4FE4S_FER_1"/>
    <property type="match status" value="2"/>
</dbReference>
<dbReference type="PROSITE" id="PS51379">
    <property type="entry name" value="4FE4S_FER_2"/>
    <property type="match status" value="2"/>
</dbReference>
<protein>
    <recommendedName>
        <fullName evidence="2">Photosystem I iron-sulfur center</fullName>
        <ecNumber evidence="2">1.97.1.12</ecNumber>
    </recommendedName>
    <alternativeName>
        <fullName evidence="2">9 kDa polypeptide</fullName>
    </alternativeName>
    <alternativeName>
        <fullName evidence="2">PSI-C</fullName>
    </alternativeName>
    <alternativeName>
        <fullName evidence="2">Photosystem I subunit VII</fullName>
    </alternativeName>
    <alternativeName>
        <fullName evidence="2">PsaC</fullName>
    </alternativeName>
</protein>
<geneLocation type="chloroplast"/>
<comment type="function">
    <text>Apoprotein for the two 4Fe-4S centers FA and FB of photosystem I (PSI); essential for photochemical activity. FB is the terminal electron acceptor of PSI, donating electrons to ferredoxin. The C-terminus interacts with PsaA/B/D and helps assemble the protein into the PSI complex. Required for binding of PsaD and PsaE to PSI. PSI is a plastocyanin/cytochrome c6-ferredoxin oxidoreductase, converting photonic excitation into a charge separation, which transfers an electron from the donor P700 chlorophyll pair to the spectroscopically characterized acceptors A0, A1, FX, FA and FB in turn.</text>
</comment>
<comment type="catalytic activity">
    <reaction evidence="2">
        <text>reduced [plastocyanin] + hnu + oxidized [2Fe-2S]-[ferredoxin] = oxidized [plastocyanin] + reduced [2Fe-2S]-[ferredoxin]</text>
        <dbReference type="Rhea" id="RHEA:30407"/>
        <dbReference type="Rhea" id="RHEA-COMP:10000"/>
        <dbReference type="Rhea" id="RHEA-COMP:10001"/>
        <dbReference type="Rhea" id="RHEA-COMP:10039"/>
        <dbReference type="Rhea" id="RHEA-COMP:10040"/>
        <dbReference type="ChEBI" id="CHEBI:29036"/>
        <dbReference type="ChEBI" id="CHEBI:30212"/>
        <dbReference type="ChEBI" id="CHEBI:33737"/>
        <dbReference type="ChEBI" id="CHEBI:33738"/>
        <dbReference type="ChEBI" id="CHEBI:49552"/>
        <dbReference type="EC" id="1.97.1.12"/>
    </reaction>
</comment>
<comment type="cofactor">
    <cofactor evidence="2">
        <name>[4Fe-4S] cluster</name>
        <dbReference type="ChEBI" id="CHEBI:49883"/>
    </cofactor>
    <text evidence="2">Binds 2 [4Fe-4S] clusters. Cluster 2 is most probably the spectroscopically characterized electron acceptor FA and cluster 1 is most probably FB.</text>
</comment>
<comment type="subunit">
    <text evidence="2">The eukaryotic PSI reaction center is composed of at least 11 subunits.</text>
</comment>
<comment type="subcellular location">
    <subcellularLocation>
        <location evidence="2">Plastid</location>
        <location evidence="2">Chloroplast thylakoid membrane</location>
        <topology evidence="2">Peripheral membrane protein</topology>
        <orientation evidence="2">Stromal side</orientation>
    </subcellularLocation>
</comment>
<reference key="1">
    <citation type="journal article" date="1993" name="Plant Mol. Biol.">
        <title>Glutamate synthase is plastid-encoded in a red alga: implications for the evolution of glutamate synthases.</title>
        <authorList>
            <person name="Valentin K.-U."/>
            <person name="Kostrzewa M."/>
            <person name="Zetsche K."/>
        </authorList>
    </citation>
    <scope>NUCLEOTIDE SEQUENCE [GENOMIC DNA]</scope>
    <source>
        <strain>LB 95.79</strain>
    </source>
</reference>
<gene>
    <name evidence="2" type="primary">psaC</name>
</gene>
<sequence length="81" mass="8744">MAHSVKVYDTCIGCTQCVRACPCDVLEMVPRDGCKAGQIASAPRTEDCIGCKRCETACPTDFLSVRVYLGGETTRSMGLTY</sequence>
<evidence type="ECO:0000250" key="1"/>
<evidence type="ECO:0000255" key="2">
    <source>
        <dbReference type="HAMAP-Rule" id="MF_01303"/>
    </source>
</evidence>